<gene>
    <name type="primary">Cgrrf1</name>
    <name type="synonym">Cgr19</name>
</gene>
<organism>
    <name type="scientific">Mus musculus</name>
    <name type="common">Mouse</name>
    <dbReference type="NCBI Taxonomy" id="10090"/>
    <lineage>
        <taxon>Eukaryota</taxon>
        <taxon>Metazoa</taxon>
        <taxon>Chordata</taxon>
        <taxon>Craniata</taxon>
        <taxon>Vertebrata</taxon>
        <taxon>Euteleostomi</taxon>
        <taxon>Mammalia</taxon>
        <taxon>Eutheria</taxon>
        <taxon>Euarchontoglires</taxon>
        <taxon>Glires</taxon>
        <taxon>Rodentia</taxon>
        <taxon>Myomorpha</taxon>
        <taxon>Muroidea</taxon>
        <taxon>Muridae</taxon>
        <taxon>Murinae</taxon>
        <taxon>Mus</taxon>
        <taxon>Mus</taxon>
    </lineage>
</organism>
<accession>Q8BMJ7</accession>
<accession>Q3U3F1</accession>
<accession>Q8CI24</accession>
<evidence type="ECO:0000250" key="1">
    <source>
        <dbReference type="UniProtKB" id="P97587"/>
    </source>
</evidence>
<evidence type="ECO:0000250" key="2">
    <source>
        <dbReference type="UniProtKB" id="Q99675"/>
    </source>
</evidence>
<evidence type="ECO:0000255" key="3">
    <source>
        <dbReference type="PROSITE-ProRule" id="PRU00175"/>
    </source>
</evidence>
<evidence type="ECO:0000305" key="4"/>
<sequence>MAAVFLVTLYEYSPLFYIAVVFTCFIVTTGLVLGWFGWDVPVILRNSEETQFSTRAFKKQMRQVKNPFGLEITNSSAASLATGMALRTDCLEDSRLTCYWGCSVQKLYEALQKHAYCFRISTPQALEEALYSDYLHREQYFIKKHSKEEIYCQLPSDTEIEDFGPVPRSRYPLVALLTLADEDDREIYDIISMVSVIHIPDKTYKLPCRILYQYLILAQGQFYDLKQLFMSANNSPPPSNDESPEDRSVEQSLLEKVGLAGNDGDPVEESSRDCVVCQNGGVNWVLLPCRHACLCDSCVRYFKQCPMCRQFVQESFALCGQKEPDKDLLETS</sequence>
<feature type="chain" id="PRO_0000055870" description="Cell growth regulator with RING finger domain protein 1">
    <location>
        <begin position="1"/>
        <end position="332"/>
    </location>
</feature>
<feature type="zinc finger region" description="RING-type" evidence="3">
    <location>
        <begin position="274"/>
        <end position="309"/>
    </location>
</feature>
<feature type="sequence conflict" description="In Ref. 2; AAH37677." evidence="4" ref="2">
    <original>TG</original>
    <variation>S</variation>
    <location>
        <begin position="82"/>
        <end position="83"/>
    </location>
</feature>
<comment type="function">
    <text evidence="1">Able to inhibit growth in several cell lines.</text>
</comment>
<comment type="subcellular location">
    <subcellularLocation>
        <location evidence="2">Nucleus</location>
    </subcellularLocation>
    <subcellularLocation>
        <location evidence="2">Endoplasmic reticulum</location>
    </subcellularLocation>
</comment>
<proteinExistence type="evidence at transcript level"/>
<keyword id="KW-0131">Cell cycle</keyword>
<keyword id="KW-0256">Endoplasmic reticulum</keyword>
<keyword id="KW-0338">Growth arrest</keyword>
<keyword id="KW-0479">Metal-binding</keyword>
<keyword id="KW-0539">Nucleus</keyword>
<keyword id="KW-1185">Reference proteome</keyword>
<keyword id="KW-0862">Zinc</keyword>
<keyword id="KW-0863">Zinc-finger</keyword>
<name>CGRF1_MOUSE</name>
<dbReference type="EMBL" id="AK030755">
    <property type="protein sequence ID" value="BAC27121.1"/>
    <property type="molecule type" value="mRNA"/>
</dbReference>
<dbReference type="EMBL" id="AK154797">
    <property type="protein sequence ID" value="BAE32835.1"/>
    <property type="molecule type" value="mRNA"/>
</dbReference>
<dbReference type="EMBL" id="BC037677">
    <property type="protein sequence ID" value="AAH37677.1"/>
    <property type="molecule type" value="mRNA"/>
</dbReference>
<dbReference type="CCDS" id="CCDS26981.1"/>
<dbReference type="RefSeq" id="NP_081108.2">
    <property type="nucleotide sequence ID" value="NM_026832.3"/>
</dbReference>
<dbReference type="RefSeq" id="XP_006519548.1">
    <property type="nucleotide sequence ID" value="XM_006519485.3"/>
</dbReference>
<dbReference type="SMR" id="Q8BMJ7"/>
<dbReference type="BioGRID" id="213033">
    <property type="interactions" value="1"/>
</dbReference>
<dbReference type="FunCoup" id="Q8BMJ7">
    <property type="interactions" value="3593"/>
</dbReference>
<dbReference type="IntAct" id="Q8BMJ7">
    <property type="interactions" value="1"/>
</dbReference>
<dbReference type="MINT" id="Q8BMJ7"/>
<dbReference type="STRING" id="10090.ENSMUSP00000070548"/>
<dbReference type="GlyGen" id="Q8BMJ7">
    <property type="glycosylation" value="1 site, 1 N-linked glycan (1 site)"/>
</dbReference>
<dbReference type="iPTMnet" id="Q8BMJ7"/>
<dbReference type="PhosphoSitePlus" id="Q8BMJ7"/>
<dbReference type="PaxDb" id="10090-ENSMUSP00000070548"/>
<dbReference type="ProteomicsDB" id="281118"/>
<dbReference type="Pumba" id="Q8BMJ7"/>
<dbReference type="Antibodypedia" id="152">
    <property type="antibodies" value="177 antibodies from 30 providers"/>
</dbReference>
<dbReference type="DNASU" id="68755"/>
<dbReference type="Ensembl" id="ENSMUST00000068532.10">
    <property type="protein sequence ID" value="ENSMUSP00000070548.9"/>
    <property type="gene ID" value="ENSMUSG00000055128.16"/>
</dbReference>
<dbReference type="GeneID" id="68755"/>
<dbReference type="KEGG" id="mmu:68755"/>
<dbReference type="UCSC" id="uc007thj.1">
    <property type="organism name" value="mouse"/>
</dbReference>
<dbReference type="AGR" id="MGI:1916368"/>
<dbReference type="CTD" id="10668"/>
<dbReference type="MGI" id="MGI:1916368">
    <property type="gene designation" value="Cgrrf1"/>
</dbReference>
<dbReference type="VEuPathDB" id="HostDB:ENSMUSG00000055128"/>
<dbReference type="eggNOG" id="KOG4265">
    <property type="taxonomic scope" value="Eukaryota"/>
</dbReference>
<dbReference type="GeneTree" id="ENSGT00390000004542"/>
<dbReference type="HOGENOM" id="CLU_053217_0_0_1"/>
<dbReference type="InParanoid" id="Q8BMJ7"/>
<dbReference type="OMA" id="IYCQLPK"/>
<dbReference type="OrthoDB" id="10251219at2759"/>
<dbReference type="PhylomeDB" id="Q8BMJ7"/>
<dbReference type="TreeFam" id="TF328102"/>
<dbReference type="BioGRID-ORCS" id="68755">
    <property type="hits" value="1 hit in 77 CRISPR screens"/>
</dbReference>
<dbReference type="ChiTaRS" id="Cgrrf1">
    <property type="organism name" value="mouse"/>
</dbReference>
<dbReference type="PRO" id="PR:Q8BMJ7"/>
<dbReference type="Proteomes" id="UP000000589">
    <property type="component" value="Chromosome 14"/>
</dbReference>
<dbReference type="RNAct" id="Q8BMJ7">
    <property type="molecule type" value="protein"/>
</dbReference>
<dbReference type="Bgee" id="ENSMUSG00000055128">
    <property type="expression patterns" value="Expressed in gastrocnemius medialis and 230 other cell types or tissues"/>
</dbReference>
<dbReference type="ExpressionAtlas" id="Q8BMJ7">
    <property type="expression patterns" value="baseline and differential"/>
</dbReference>
<dbReference type="GO" id="GO:0005783">
    <property type="term" value="C:endoplasmic reticulum"/>
    <property type="evidence" value="ECO:0000250"/>
    <property type="project" value="UniProtKB"/>
</dbReference>
<dbReference type="GO" id="GO:0005654">
    <property type="term" value="C:nucleoplasm"/>
    <property type="evidence" value="ECO:0007669"/>
    <property type="project" value="Ensembl"/>
</dbReference>
<dbReference type="GO" id="GO:0008270">
    <property type="term" value="F:zinc ion binding"/>
    <property type="evidence" value="ECO:0007669"/>
    <property type="project" value="UniProtKB-KW"/>
</dbReference>
<dbReference type="GO" id="GO:0051726">
    <property type="term" value="P:regulation of cell cycle"/>
    <property type="evidence" value="ECO:0007669"/>
    <property type="project" value="UniProtKB-KW"/>
</dbReference>
<dbReference type="CDD" id="cd16787">
    <property type="entry name" value="mRING-HC-C3HC5_CGRF1"/>
    <property type="match status" value="1"/>
</dbReference>
<dbReference type="FunFam" id="3.30.40.10:FF:000421">
    <property type="entry name" value="Cell growth regulator with ring finger domain 1"/>
    <property type="match status" value="1"/>
</dbReference>
<dbReference type="Gene3D" id="3.30.40.10">
    <property type="entry name" value="Zinc/RING finger domain, C3HC4 (zinc finger)"/>
    <property type="match status" value="1"/>
</dbReference>
<dbReference type="InterPro" id="IPR042496">
    <property type="entry name" value="CGRF1"/>
</dbReference>
<dbReference type="InterPro" id="IPR001841">
    <property type="entry name" value="Znf_RING"/>
</dbReference>
<dbReference type="InterPro" id="IPR013083">
    <property type="entry name" value="Znf_RING/FYVE/PHD"/>
</dbReference>
<dbReference type="PANTHER" id="PTHR15379">
    <property type="entry name" value="CELL GROWTH REGULATOR WITH RING FINGER DOMAIN PROTEIN 1"/>
    <property type="match status" value="1"/>
</dbReference>
<dbReference type="PANTHER" id="PTHR15379:SF2">
    <property type="entry name" value="CELL GROWTH REGULATOR WITH RING FINGER DOMAIN PROTEIN 1"/>
    <property type="match status" value="1"/>
</dbReference>
<dbReference type="Pfam" id="PF13920">
    <property type="entry name" value="zf-C3HC4_3"/>
    <property type="match status" value="1"/>
</dbReference>
<dbReference type="SMART" id="SM00184">
    <property type="entry name" value="RING"/>
    <property type="match status" value="1"/>
</dbReference>
<dbReference type="SUPFAM" id="SSF57850">
    <property type="entry name" value="RING/U-box"/>
    <property type="match status" value="1"/>
</dbReference>
<dbReference type="PROSITE" id="PS50089">
    <property type="entry name" value="ZF_RING_2"/>
    <property type="match status" value="1"/>
</dbReference>
<protein>
    <recommendedName>
        <fullName>Cell growth regulator with RING finger domain protein 1</fullName>
    </recommendedName>
    <alternativeName>
        <fullName>Cell growth regulatory gene 19 protein</fullName>
    </alternativeName>
</protein>
<reference key="1">
    <citation type="journal article" date="2005" name="Science">
        <title>The transcriptional landscape of the mammalian genome.</title>
        <authorList>
            <person name="Carninci P."/>
            <person name="Kasukawa T."/>
            <person name="Katayama S."/>
            <person name="Gough J."/>
            <person name="Frith M.C."/>
            <person name="Maeda N."/>
            <person name="Oyama R."/>
            <person name="Ravasi T."/>
            <person name="Lenhard B."/>
            <person name="Wells C."/>
            <person name="Kodzius R."/>
            <person name="Shimokawa K."/>
            <person name="Bajic V.B."/>
            <person name="Brenner S.E."/>
            <person name="Batalov S."/>
            <person name="Forrest A.R."/>
            <person name="Zavolan M."/>
            <person name="Davis M.J."/>
            <person name="Wilming L.G."/>
            <person name="Aidinis V."/>
            <person name="Allen J.E."/>
            <person name="Ambesi-Impiombato A."/>
            <person name="Apweiler R."/>
            <person name="Aturaliya R.N."/>
            <person name="Bailey T.L."/>
            <person name="Bansal M."/>
            <person name="Baxter L."/>
            <person name="Beisel K.W."/>
            <person name="Bersano T."/>
            <person name="Bono H."/>
            <person name="Chalk A.M."/>
            <person name="Chiu K.P."/>
            <person name="Choudhary V."/>
            <person name="Christoffels A."/>
            <person name="Clutterbuck D.R."/>
            <person name="Crowe M.L."/>
            <person name="Dalla E."/>
            <person name="Dalrymple B.P."/>
            <person name="de Bono B."/>
            <person name="Della Gatta G."/>
            <person name="di Bernardo D."/>
            <person name="Down T."/>
            <person name="Engstrom P."/>
            <person name="Fagiolini M."/>
            <person name="Faulkner G."/>
            <person name="Fletcher C.F."/>
            <person name="Fukushima T."/>
            <person name="Furuno M."/>
            <person name="Futaki S."/>
            <person name="Gariboldi M."/>
            <person name="Georgii-Hemming P."/>
            <person name="Gingeras T.R."/>
            <person name="Gojobori T."/>
            <person name="Green R.E."/>
            <person name="Gustincich S."/>
            <person name="Harbers M."/>
            <person name="Hayashi Y."/>
            <person name="Hensch T.K."/>
            <person name="Hirokawa N."/>
            <person name="Hill D."/>
            <person name="Huminiecki L."/>
            <person name="Iacono M."/>
            <person name="Ikeo K."/>
            <person name="Iwama A."/>
            <person name="Ishikawa T."/>
            <person name="Jakt M."/>
            <person name="Kanapin A."/>
            <person name="Katoh M."/>
            <person name="Kawasawa Y."/>
            <person name="Kelso J."/>
            <person name="Kitamura H."/>
            <person name="Kitano H."/>
            <person name="Kollias G."/>
            <person name="Krishnan S.P."/>
            <person name="Kruger A."/>
            <person name="Kummerfeld S.K."/>
            <person name="Kurochkin I.V."/>
            <person name="Lareau L.F."/>
            <person name="Lazarevic D."/>
            <person name="Lipovich L."/>
            <person name="Liu J."/>
            <person name="Liuni S."/>
            <person name="McWilliam S."/>
            <person name="Madan Babu M."/>
            <person name="Madera M."/>
            <person name="Marchionni L."/>
            <person name="Matsuda H."/>
            <person name="Matsuzawa S."/>
            <person name="Miki H."/>
            <person name="Mignone F."/>
            <person name="Miyake S."/>
            <person name="Morris K."/>
            <person name="Mottagui-Tabar S."/>
            <person name="Mulder N."/>
            <person name="Nakano N."/>
            <person name="Nakauchi H."/>
            <person name="Ng P."/>
            <person name="Nilsson R."/>
            <person name="Nishiguchi S."/>
            <person name="Nishikawa S."/>
            <person name="Nori F."/>
            <person name="Ohara O."/>
            <person name="Okazaki Y."/>
            <person name="Orlando V."/>
            <person name="Pang K.C."/>
            <person name="Pavan W.J."/>
            <person name="Pavesi G."/>
            <person name="Pesole G."/>
            <person name="Petrovsky N."/>
            <person name="Piazza S."/>
            <person name="Reed J."/>
            <person name="Reid J.F."/>
            <person name="Ring B.Z."/>
            <person name="Ringwald M."/>
            <person name="Rost B."/>
            <person name="Ruan Y."/>
            <person name="Salzberg S.L."/>
            <person name="Sandelin A."/>
            <person name="Schneider C."/>
            <person name="Schoenbach C."/>
            <person name="Sekiguchi K."/>
            <person name="Semple C.A."/>
            <person name="Seno S."/>
            <person name="Sessa L."/>
            <person name="Sheng Y."/>
            <person name="Shibata Y."/>
            <person name="Shimada H."/>
            <person name="Shimada K."/>
            <person name="Silva D."/>
            <person name="Sinclair B."/>
            <person name="Sperling S."/>
            <person name="Stupka E."/>
            <person name="Sugiura K."/>
            <person name="Sultana R."/>
            <person name="Takenaka Y."/>
            <person name="Taki K."/>
            <person name="Tammoja K."/>
            <person name="Tan S.L."/>
            <person name="Tang S."/>
            <person name="Taylor M.S."/>
            <person name="Tegner J."/>
            <person name="Teichmann S.A."/>
            <person name="Ueda H.R."/>
            <person name="van Nimwegen E."/>
            <person name="Verardo R."/>
            <person name="Wei C.L."/>
            <person name="Yagi K."/>
            <person name="Yamanishi H."/>
            <person name="Zabarovsky E."/>
            <person name="Zhu S."/>
            <person name="Zimmer A."/>
            <person name="Hide W."/>
            <person name="Bult C."/>
            <person name="Grimmond S.M."/>
            <person name="Teasdale R.D."/>
            <person name="Liu E.T."/>
            <person name="Brusic V."/>
            <person name="Quackenbush J."/>
            <person name="Wahlestedt C."/>
            <person name="Mattick J.S."/>
            <person name="Hume D.A."/>
            <person name="Kai C."/>
            <person name="Sasaki D."/>
            <person name="Tomaru Y."/>
            <person name="Fukuda S."/>
            <person name="Kanamori-Katayama M."/>
            <person name="Suzuki M."/>
            <person name="Aoki J."/>
            <person name="Arakawa T."/>
            <person name="Iida J."/>
            <person name="Imamura K."/>
            <person name="Itoh M."/>
            <person name="Kato T."/>
            <person name="Kawaji H."/>
            <person name="Kawagashira N."/>
            <person name="Kawashima T."/>
            <person name="Kojima M."/>
            <person name="Kondo S."/>
            <person name="Konno H."/>
            <person name="Nakano K."/>
            <person name="Ninomiya N."/>
            <person name="Nishio T."/>
            <person name="Okada M."/>
            <person name="Plessy C."/>
            <person name="Shibata K."/>
            <person name="Shiraki T."/>
            <person name="Suzuki S."/>
            <person name="Tagami M."/>
            <person name="Waki K."/>
            <person name="Watahiki A."/>
            <person name="Okamura-Oho Y."/>
            <person name="Suzuki H."/>
            <person name="Kawai J."/>
            <person name="Hayashizaki Y."/>
        </authorList>
    </citation>
    <scope>NUCLEOTIDE SEQUENCE [LARGE SCALE MRNA]</scope>
    <source>
        <strain>C57BL/6J</strain>
        <strain>NOD</strain>
    </source>
</reference>
<reference key="2">
    <citation type="journal article" date="2004" name="Genome Res.">
        <title>The status, quality, and expansion of the NIH full-length cDNA project: the Mammalian Gene Collection (MGC).</title>
        <authorList>
            <consortium name="The MGC Project Team"/>
        </authorList>
    </citation>
    <scope>NUCLEOTIDE SEQUENCE [LARGE SCALE MRNA]</scope>
    <source>
        <strain>Czech II</strain>
    </source>
</reference>